<evidence type="ECO:0000255" key="1">
    <source>
        <dbReference type="HAMAP-Rule" id="MF_01152"/>
    </source>
</evidence>
<accession>Q1RGI7</accession>
<organism>
    <name type="scientific">Escherichia coli (strain UTI89 / UPEC)</name>
    <dbReference type="NCBI Taxonomy" id="364106"/>
    <lineage>
        <taxon>Bacteria</taxon>
        <taxon>Pseudomonadati</taxon>
        <taxon>Pseudomonadota</taxon>
        <taxon>Gammaproteobacteria</taxon>
        <taxon>Enterobacterales</taxon>
        <taxon>Enterobacteriaceae</taxon>
        <taxon>Escherichia</taxon>
    </lineage>
</organism>
<feature type="chain" id="PRO_1000085190" description="Chaperone protein DnaJ">
    <location>
        <begin position="1"/>
        <end position="376"/>
    </location>
</feature>
<feature type="domain" description="J" evidence="1">
    <location>
        <begin position="5"/>
        <end position="70"/>
    </location>
</feature>
<feature type="repeat" description="CXXCXGXG motif">
    <location>
        <begin position="144"/>
        <end position="151"/>
    </location>
</feature>
<feature type="repeat" description="CXXCXGXG motif">
    <location>
        <begin position="161"/>
        <end position="168"/>
    </location>
</feature>
<feature type="repeat" description="CXXCXGXG motif">
    <location>
        <begin position="183"/>
        <end position="190"/>
    </location>
</feature>
<feature type="repeat" description="CXXCXGXG motif">
    <location>
        <begin position="197"/>
        <end position="204"/>
    </location>
</feature>
<feature type="zinc finger region" description="CR-type" evidence="1">
    <location>
        <begin position="131"/>
        <end position="209"/>
    </location>
</feature>
<feature type="binding site" evidence="1">
    <location>
        <position position="144"/>
    </location>
    <ligand>
        <name>Zn(2+)</name>
        <dbReference type="ChEBI" id="CHEBI:29105"/>
        <label>1</label>
    </ligand>
</feature>
<feature type="binding site" evidence="1">
    <location>
        <position position="147"/>
    </location>
    <ligand>
        <name>Zn(2+)</name>
        <dbReference type="ChEBI" id="CHEBI:29105"/>
        <label>1</label>
    </ligand>
</feature>
<feature type="binding site" evidence="1">
    <location>
        <position position="161"/>
    </location>
    <ligand>
        <name>Zn(2+)</name>
        <dbReference type="ChEBI" id="CHEBI:29105"/>
        <label>2</label>
    </ligand>
</feature>
<feature type="binding site" evidence="1">
    <location>
        <position position="164"/>
    </location>
    <ligand>
        <name>Zn(2+)</name>
        <dbReference type="ChEBI" id="CHEBI:29105"/>
        <label>2</label>
    </ligand>
</feature>
<feature type="binding site" evidence="1">
    <location>
        <position position="183"/>
    </location>
    <ligand>
        <name>Zn(2+)</name>
        <dbReference type="ChEBI" id="CHEBI:29105"/>
        <label>2</label>
    </ligand>
</feature>
<feature type="binding site" evidence="1">
    <location>
        <position position="186"/>
    </location>
    <ligand>
        <name>Zn(2+)</name>
        <dbReference type="ChEBI" id="CHEBI:29105"/>
        <label>2</label>
    </ligand>
</feature>
<feature type="binding site" evidence="1">
    <location>
        <position position="197"/>
    </location>
    <ligand>
        <name>Zn(2+)</name>
        <dbReference type="ChEBI" id="CHEBI:29105"/>
        <label>1</label>
    </ligand>
</feature>
<feature type="binding site" evidence="1">
    <location>
        <position position="200"/>
    </location>
    <ligand>
        <name>Zn(2+)</name>
        <dbReference type="ChEBI" id="CHEBI:29105"/>
        <label>1</label>
    </ligand>
</feature>
<sequence>MAKQDYYEILGVSKTAEEREIKKAYKRLAMKYHPDRNQGDKEAEAKFKEIKEAYEVLTDSQKRAAYDQYGHAAFEQGGMGGGGFGGGADFSDIFGDVFGDIFGGGRGRQRAARGADLRYNMELTLEEAVRGVTKEIRIPTLEECDVCHGSGAKPGTQPQTCPTCHGSGQVQMRQGFFAVQQTCPHCQGRGTLIKDPCNKCHGHGRVERSKTLSVKIPAGVDTGDRIRLAGEGEAGEHGAPAGDLYVQVQVKQHPIFEREGNNLYCEVPINFAMAALGGEIEVPTLDGRVKLKVPGETQTGKLFRMRGKGVKSVRGGAQGDLLCRVVVETPVGLNEKQKQLLQELQESFGGPTGEHNSPRSKSFFDGVKKFFDDLTR</sequence>
<protein>
    <recommendedName>
        <fullName evidence="1">Chaperone protein DnaJ</fullName>
    </recommendedName>
</protein>
<name>DNAJ_ECOUT</name>
<comment type="function">
    <text evidence="1">Participates actively in the response to hyperosmotic and heat shock by preventing the aggregation of stress-denatured proteins and by disaggregating proteins, also in an autonomous, DnaK-independent fashion. Unfolded proteins bind initially to DnaJ; upon interaction with the DnaJ-bound protein, DnaK hydrolyzes its bound ATP, resulting in the formation of a stable complex. GrpE releases ADP from DnaK; ATP binding to DnaK triggers the release of the substrate protein, thus completing the reaction cycle. Several rounds of ATP-dependent interactions between DnaJ, DnaK and GrpE are required for fully efficient folding. Also involved, together with DnaK and GrpE, in the DNA replication of plasmids through activation of initiation proteins.</text>
</comment>
<comment type="cofactor">
    <cofactor evidence="1">
        <name>Zn(2+)</name>
        <dbReference type="ChEBI" id="CHEBI:29105"/>
    </cofactor>
    <text evidence="1">Binds 2 Zn(2+) ions per monomer.</text>
</comment>
<comment type="subunit">
    <text evidence="1">Homodimer.</text>
</comment>
<comment type="subcellular location">
    <subcellularLocation>
        <location evidence="1">Cytoplasm</location>
    </subcellularLocation>
</comment>
<comment type="domain">
    <text evidence="1">The J domain is necessary and sufficient to stimulate DnaK ATPase activity. Zinc center 1 plays an important role in the autonomous, DnaK-independent chaperone activity of DnaJ. Zinc center 2 is essential for interaction with DnaK and for DnaJ activity.</text>
</comment>
<comment type="similarity">
    <text evidence="1">Belongs to the DnaJ family.</text>
</comment>
<keyword id="KW-0143">Chaperone</keyword>
<keyword id="KW-0963">Cytoplasm</keyword>
<keyword id="KW-0235">DNA replication</keyword>
<keyword id="KW-0479">Metal-binding</keyword>
<keyword id="KW-0677">Repeat</keyword>
<keyword id="KW-0346">Stress response</keyword>
<keyword id="KW-0862">Zinc</keyword>
<keyword id="KW-0863">Zinc-finger</keyword>
<reference key="1">
    <citation type="journal article" date="2006" name="Proc. Natl. Acad. Sci. U.S.A.">
        <title>Identification of genes subject to positive selection in uropathogenic strains of Escherichia coli: a comparative genomics approach.</title>
        <authorList>
            <person name="Chen S.L."/>
            <person name="Hung C.-S."/>
            <person name="Xu J."/>
            <person name="Reigstad C.S."/>
            <person name="Magrini V."/>
            <person name="Sabo A."/>
            <person name="Blasiar D."/>
            <person name="Bieri T."/>
            <person name="Meyer R.R."/>
            <person name="Ozersky P."/>
            <person name="Armstrong J.R."/>
            <person name="Fulton R.S."/>
            <person name="Latreille J.P."/>
            <person name="Spieth J."/>
            <person name="Hooton T.M."/>
            <person name="Mardis E.R."/>
            <person name="Hultgren S.J."/>
            <person name="Gordon J.I."/>
        </authorList>
    </citation>
    <scope>NUCLEOTIDE SEQUENCE [LARGE SCALE GENOMIC DNA]</scope>
    <source>
        <strain>UTI89 / UPEC</strain>
    </source>
</reference>
<gene>
    <name evidence="1" type="primary">dnaJ</name>
    <name type="ordered locus">UTI89_C0017</name>
</gene>
<proteinExistence type="inferred from homology"/>
<dbReference type="EMBL" id="CP000243">
    <property type="protein sequence ID" value="ABE05527.1"/>
    <property type="molecule type" value="Genomic_DNA"/>
</dbReference>
<dbReference type="RefSeq" id="WP_001118464.1">
    <property type="nucleotide sequence ID" value="NZ_CP064825.1"/>
</dbReference>
<dbReference type="SMR" id="Q1RGI7"/>
<dbReference type="GeneID" id="93777428"/>
<dbReference type="KEGG" id="eci:UTI89_C0017"/>
<dbReference type="HOGENOM" id="CLU_017633_0_7_6"/>
<dbReference type="Proteomes" id="UP000001952">
    <property type="component" value="Chromosome"/>
</dbReference>
<dbReference type="GO" id="GO:0005737">
    <property type="term" value="C:cytoplasm"/>
    <property type="evidence" value="ECO:0007669"/>
    <property type="project" value="UniProtKB-SubCell"/>
</dbReference>
<dbReference type="GO" id="GO:0005524">
    <property type="term" value="F:ATP binding"/>
    <property type="evidence" value="ECO:0007669"/>
    <property type="project" value="InterPro"/>
</dbReference>
<dbReference type="GO" id="GO:0031072">
    <property type="term" value="F:heat shock protein binding"/>
    <property type="evidence" value="ECO:0007669"/>
    <property type="project" value="InterPro"/>
</dbReference>
<dbReference type="GO" id="GO:0051082">
    <property type="term" value="F:unfolded protein binding"/>
    <property type="evidence" value="ECO:0007669"/>
    <property type="project" value="UniProtKB-UniRule"/>
</dbReference>
<dbReference type="GO" id="GO:0008270">
    <property type="term" value="F:zinc ion binding"/>
    <property type="evidence" value="ECO:0007669"/>
    <property type="project" value="UniProtKB-UniRule"/>
</dbReference>
<dbReference type="GO" id="GO:0051085">
    <property type="term" value="P:chaperone cofactor-dependent protein refolding"/>
    <property type="evidence" value="ECO:0007669"/>
    <property type="project" value="TreeGrafter"/>
</dbReference>
<dbReference type="GO" id="GO:0006260">
    <property type="term" value="P:DNA replication"/>
    <property type="evidence" value="ECO:0007669"/>
    <property type="project" value="UniProtKB-KW"/>
</dbReference>
<dbReference type="GO" id="GO:0042026">
    <property type="term" value="P:protein refolding"/>
    <property type="evidence" value="ECO:0007669"/>
    <property type="project" value="TreeGrafter"/>
</dbReference>
<dbReference type="GO" id="GO:0009408">
    <property type="term" value="P:response to heat"/>
    <property type="evidence" value="ECO:0007669"/>
    <property type="project" value="InterPro"/>
</dbReference>
<dbReference type="CDD" id="cd06257">
    <property type="entry name" value="DnaJ"/>
    <property type="match status" value="1"/>
</dbReference>
<dbReference type="CDD" id="cd10747">
    <property type="entry name" value="DnaJ_C"/>
    <property type="match status" value="1"/>
</dbReference>
<dbReference type="CDD" id="cd10719">
    <property type="entry name" value="DnaJ_zf"/>
    <property type="match status" value="1"/>
</dbReference>
<dbReference type="FunFam" id="1.10.287.110:FF:000003">
    <property type="entry name" value="Molecular chaperone DnaJ"/>
    <property type="match status" value="1"/>
</dbReference>
<dbReference type="FunFam" id="2.10.230.10:FF:000002">
    <property type="entry name" value="Molecular chaperone DnaJ"/>
    <property type="match status" value="1"/>
</dbReference>
<dbReference type="FunFam" id="2.60.260.20:FF:000004">
    <property type="entry name" value="Molecular chaperone DnaJ"/>
    <property type="match status" value="1"/>
</dbReference>
<dbReference type="Gene3D" id="1.10.287.110">
    <property type="entry name" value="DnaJ domain"/>
    <property type="match status" value="1"/>
</dbReference>
<dbReference type="Gene3D" id="2.10.230.10">
    <property type="entry name" value="Heat shock protein DnaJ, cysteine-rich domain"/>
    <property type="match status" value="1"/>
</dbReference>
<dbReference type="Gene3D" id="2.60.260.20">
    <property type="entry name" value="Urease metallochaperone UreE, N-terminal domain"/>
    <property type="match status" value="2"/>
</dbReference>
<dbReference type="HAMAP" id="MF_01152">
    <property type="entry name" value="DnaJ"/>
    <property type="match status" value="1"/>
</dbReference>
<dbReference type="InterPro" id="IPR012724">
    <property type="entry name" value="DnaJ"/>
</dbReference>
<dbReference type="InterPro" id="IPR002939">
    <property type="entry name" value="DnaJ_C"/>
</dbReference>
<dbReference type="InterPro" id="IPR001623">
    <property type="entry name" value="DnaJ_domain"/>
</dbReference>
<dbReference type="InterPro" id="IPR018253">
    <property type="entry name" value="DnaJ_domain_CS"/>
</dbReference>
<dbReference type="InterPro" id="IPR008971">
    <property type="entry name" value="HSP40/DnaJ_pept-bd"/>
</dbReference>
<dbReference type="InterPro" id="IPR001305">
    <property type="entry name" value="HSP_DnaJ_Cys-rich_dom"/>
</dbReference>
<dbReference type="InterPro" id="IPR036410">
    <property type="entry name" value="HSP_DnaJ_Cys-rich_dom_sf"/>
</dbReference>
<dbReference type="InterPro" id="IPR036869">
    <property type="entry name" value="J_dom_sf"/>
</dbReference>
<dbReference type="NCBIfam" id="TIGR02349">
    <property type="entry name" value="DnaJ_bact"/>
    <property type="match status" value="1"/>
</dbReference>
<dbReference type="NCBIfam" id="NF008035">
    <property type="entry name" value="PRK10767.1"/>
    <property type="match status" value="1"/>
</dbReference>
<dbReference type="PANTHER" id="PTHR43096:SF48">
    <property type="entry name" value="CHAPERONE PROTEIN DNAJ"/>
    <property type="match status" value="1"/>
</dbReference>
<dbReference type="PANTHER" id="PTHR43096">
    <property type="entry name" value="DNAJ HOMOLOG 1, MITOCHONDRIAL-RELATED"/>
    <property type="match status" value="1"/>
</dbReference>
<dbReference type="Pfam" id="PF00226">
    <property type="entry name" value="DnaJ"/>
    <property type="match status" value="1"/>
</dbReference>
<dbReference type="Pfam" id="PF01556">
    <property type="entry name" value="DnaJ_C"/>
    <property type="match status" value="1"/>
</dbReference>
<dbReference type="Pfam" id="PF00684">
    <property type="entry name" value="DnaJ_CXXCXGXG"/>
    <property type="match status" value="1"/>
</dbReference>
<dbReference type="PRINTS" id="PR00625">
    <property type="entry name" value="JDOMAIN"/>
</dbReference>
<dbReference type="SMART" id="SM00271">
    <property type="entry name" value="DnaJ"/>
    <property type="match status" value="1"/>
</dbReference>
<dbReference type="SUPFAM" id="SSF46565">
    <property type="entry name" value="Chaperone J-domain"/>
    <property type="match status" value="1"/>
</dbReference>
<dbReference type="SUPFAM" id="SSF57938">
    <property type="entry name" value="DnaJ/Hsp40 cysteine-rich domain"/>
    <property type="match status" value="1"/>
</dbReference>
<dbReference type="SUPFAM" id="SSF49493">
    <property type="entry name" value="HSP40/DnaJ peptide-binding domain"/>
    <property type="match status" value="2"/>
</dbReference>
<dbReference type="PROSITE" id="PS00636">
    <property type="entry name" value="DNAJ_1"/>
    <property type="match status" value="1"/>
</dbReference>
<dbReference type="PROSITE" id="PS50076">
    <property type="entry name" value="DNAJ_2"/>
    <property type="match status" value="1"/>
</dbReference>
<dbReference type="PROSITE" id="PS51188">
    <property type="entry name" value="ZF_CR"/>
    <property type="match status" value="1"/>
</dbReference>